<gene>
    <name evidence="1" type="primary">pdxS</name>
    <name type="ordered locus">OB2687</name>
</gene>
<keyword id="KW-0456">Lyase</keyword>
<keyword id="KW-0663">Pyridoxal phosphate</keyword>
<keyword id="KW-1185">Reference proteome</keyword>
<keyword id="KW-0704">Schiff base</keyword>
<dbReference type="EC" id="4.3.3.6" evidence="1"/>
<dbReference type="EMBL" id="BA000028">
    <property type="protein sequence ID" value="BAC14643.1"/>
    <property type="molecule type" value="Genomic_DNA"/>
</dbReference>
<dbReference type="RefSeq" id="WP_011067081.1">
    <property type="nucleotide sequence ID" value="NC_004193.1"/>
</dbReference>
<dbReference type="SMR" id="Q8EN03"/>
<dbReference type="STRING" id="221109.gene:10734939"/>
<dbReference type="KEGG" id="oih:OB2687"/>
<dbReference type="eggNOG" id="COG0214">
    <property type="taxonomic scope" value="Bacteria"/>
</dbReference>
<dbReference type="HOGENOM" id="CLU_055352_1_0_9"/>
<dbReference type="OrthoDB" id="9772545at2"/>
<dbReference type="PhylomeDB" id="Q8EN03"/>
<dbReference type="UniPathway" id="UPA00245"/>
<dbReference type="Proteomes" id="UP000000822">
    <property type="component" value="Chromosome"/>
</dbReference>
<dbReference type="GO" id="GO:0036381">
    <property type="term" value="F:pyridoxal 5'-phosphate synthase (glutamine hydrolysing) activity"/>
    <property type="evidence" value="ECO:0007669"/>
    <property type="project" value="UniProtKB-UniRule"/>
</dbReference>
<dbReference type="GO" id="GO:0006520">
    <property type="term" value="P:amino acid metabolic process"/>
    <property type="evidence" value="ECO:0007669"/>
    <property type="project" value="TreeGrafter"/>
</dbReference>
<dbReference type="GO" id="GO:0042823">
    <property type="term" value="P:pyridoxal phosphate biosynthetic process"/>
    <property type="evidence" value="ECO:0007669"/>
    <property type="project" value="UniProtKB-UniRule"/>
</dbReference>
<dbReference type="GO" id="GO:0008615">
    <property type="term" value="P:pyridoxine biosynthetic process"/>
    <property type="evidence" value="ECO:0007669"/>
    <property type="project" value="TreeGrafter"/>
</dbReference>
<dbReference type="CDD" id="cd04727">
    <property type="entry name" value="pdxS"/>
    <property type="match status" value="1"/>
</dbReference>
<dbReference type="FunFam" id="3.20.20.70:FF:000001">
    <property type="entry name" value="Pyridoxine biosynthesis protein PDX1"/>
    <property type="match status" value="1"/>
</dbReference>
<dbReference type="Gene3D" id="3.20.20.70">
    <property type="entry name" value="Aldolase class I"/>
    <property type="match status" value="1"/>
</dbReference>
<dbReference type="HAMAP" id="MF_01824">
    <property type="entry name" value="PdxS"/>
    <property type="match status" value="1"/>
</dbReference>
<dbReference type="InterPro" id="IPR013785">
    <property type="entry name" value="Aldolase_TIM"/>
</dbReference>
<dbReference type="InterPro" id="IPR001852">
    <property type="entry name" value="PdxS/SNZ"/>
</dbReference>
<dbReference type="InterPro" id="IPR033755">
    <property type="entry name" value="PdxS/SNZ_N"/>
</dbReference>
<dbReference type="InterPro" id="IPR011060">
    <property type="entry name" value="RibuloseP-bd_barrel"/>
</dbReference>
<dbReference type="NCBIfam" id="NF003215">
    <property type="entry name" value="PRK04180.1"/>
    <property type="match status" value="1"/>
</dbReference>
<dbReference type="NCBIfam" id="TIGR00343">
    <property type="entry name" value="pyridoxal 5'-phosphate synthase lyase subunit PdxS"/>
    <property type="match status" value="1"/>
</dbReference>
<dbReference type="PANTHER" id="PTHR31829">
    <property type="entry name" value="PYRIDOXAL 5'-PHOSPHATE SYNTHASE SUBUNIT SNZ1-RELATED"/>
    <property type="match status" value="1"/>
</dbReference>
<dbReference type="PANTHER" id="PTHR31829:SF0">
    <property type="entry name" value="PYRIDOXAL 5'-PHOSPHATE SYNTHASE SUBUNIT SNZ1-RELATED"/>
    <property type="match status" value="1"/>
</dbReference>
<dbReference type="Pfam" id="PF01680">
    <property type="entry name" value="SOR_SNZ"/>
    <property type="match status" value="1"/>
</dbReference>
<dbReference type="PIRSF" id="PIRSF029271">
    <property type="entry name" value="Pdx1"/>
    <property type="match status" value="1"/>
</dbReference>
<dbReference type="SUPFAM" id="SSF51366">
    <property type="entry name" value="Ribulose-phoshate binding barrel"/>
    <property type="match status" value="1"/>
</dbReference>
<dbReference type="PROSITE" id="PS01235">
    <property type="entry name" value="PDXS_SNZ_1"/>
    <property type="match status" value="1"/>
</dbReference>
<dbReference type="PROSITE" id="PS51129">
    <property type="entry name" value="PDXS_SNZ_2"/>
    <property type="match status" value="1"/>
</dbReference>
<comment type="function">
    <text evidence="1">Catalyzes the formation of pyridoxal 5'-phosphate from ribose 5-phosphate (RBP), glyceraldehyde 3-phosphate (G3P) and ammonia. The ammonia is provided by the PdxT subunit. Can also use ribulose 5-phosphate and dihydroxyacetone phosphate as substrates, resulting from enzyme-catalyzed isomerization of RBP and G3P, respectively.</text>
</comment>
<comment type="catalytic activity">
    <reaction evidence="1">
        <text>aldehydo-D-ribose 5-phosphate + D-glyceraldehyde 3-phosphate + L-glutamine = pyridoxal 5'-phosphate + L-glutamate + phosphate + 3 H2O + H(+)</text>
        <dbReference type="Rhea" id="RHEA:31507"/>
        <dbReference type="ChEBI" id="CHEBI:15377"/>
        <dbReference type="ChEBI" id="CHEBI:15378"/>
        <dbReference type="ChEBI" id="CHEBI:29985"/>
        <dbReference type="ChEBI" id="CHEBI:43474"/>
        <dbReference type="ChEBI" id="CHEBI:58273"/>
        <dbReference type="ChEBI" id="CHEBI:58359"/>
        <dbReference type="ChEBI" id="CHEBI:59776"/>
        <dbReference type="ChEBI" id="CHEBI:597326"/>
        <dbReference type="EC" id="4.3.3.6"/>
    </reaction>
</comment>
<comment type="pathway">
    <text evidence="1">Cofactor biosynthesis; pyridoxal 5'-phosphate biosynthesis.</text>
</comment>
<comment type="subunit">
    <text evidence="1">In the presence of PdxT, forms a dodecamer of heterodimers.</text>
</comment>
<comment type="similarity">
    <text evidence="1">Belongs to the PdxS/SNZ family.</text>
</comment>
<name>PDXS_OCEIH</name>
<organism>
    <name type="scientific">Oceanobacillus iheyensis (strain DSM 14371 / CIP 107618 / JCM 11309 / KCTC 3954 / HTE831)</name>
    <dbReference type="NCBI Taxonomy" id="221109"/>
    <lineage>
        <taxon>Bacteria</taxon>
        <taxon>Bacillati</taxon>
        <taxon>Bacillota</taxon>
        <taxon>Bacilli</taxon>
        <taxon>Bacillales</taxon>
        <taxon>Bacillaceae</taxon>
        <taxon>Oceanobacillus</taxon>
    </lineage>
</organism>
<sequence>MERKLGTDRVKRGMAQMQKGGVIMDVVNSEQAKIAEQAGAVAVMALERVPSDIRAAGGVARMANPSLVEEIIQSVSIPVMAKARIGHIVEARVLESLGVDYIDESEVLTPADEVFHLNKSDYTVPFVCGCRDLGEAARRIGEGAAMLRTKGEPGTGNIVEAVRHIREVQAQVNKVVHMSKDELMTEAKNLGAPYEILLQIKENGRLPVVNFAAGGVATPADAALMMELGADGVFVGSGIFKSHHPEKFARAIVQATTYFDDYERIAEVSKDLGEAMTGIDVHSLAADQRMQERGW</sequence>
<feature type="chain" id="PRO_0000109407" description="Pyridoxal 5'-phosphate synthase subunit PdxS">
    <location>
        <begin position="1"/>
        <end position="295"/>
    </location>
</feature>
<feature type="active site" description="Schiff-base intermediate with D-ribose 5-phosphate" evidence="1">
    <location>
        <position position="82"/>
    </location>
</feature>
<feature type="binding site" evidence="1">
    <location>
        <position position="25"/>
    </location>
    <ligand>
        <name>D-ribose 5-phosphate</name>
        <dbReference type="ChEBI" id="CHEBI:78346"/>
    </ligand>
</feature>
<feature type="binding site" evidence="1">
    <location>
        <position position="154"/>
    </location>
    <ligand>
        <name>D-ribose 5-phosphate</name>
        <dbReference type="ChEBI" id="CHEBI:78346"/>
    </ligand>
</feature>
<feature type="binding site" evidence="1">
    <location>
        <position position="166"/>
    </location>
    <ligand>
        <name>D-glyceraldehyde 3-phosphate</name>
        <dbReference type="ChEBI" id="CHEBI:59776"/>
    </ligand>
</feature>
<feature type="binding site" evidence="1">
    <location>
        <position position="215"/>
    </location>
    <ligand>
        <name>D-ribose 5-phosphate</name>
        <dbReference type="ChEBI" id="CHEBI:78346"/>
    </ligand>
</feature>
<feature type="binding site" evidence="1">
    <location>
        <begin position="236"/>
        <end position="237"/>
    </location>
    <ligand>
        <name>D-ribose 5-phosphate</name>
        <dbReference type="ChEBI" id="CHEBI:78346"/>
    </ligand>
</feature>
<reference key="1">
    <citation type="journal article" date="2002" name="Nucleic Acids Res.">
        <title>Genome sequence of Oceanobacillus iheyensis isolated from the Iheya Ridge and its unexpected adaptive capabilities to extreme environments.</title>
        <authorList>
            <person name="Takami H."/>
            <person name="Takaki Y."/>
            <person name="Uchiyama I."/>
        </authorList>
    </citation>
    <scope>NUCLEOTIDE SEQUENCE [LARGE SCALE GENOMIC DNA]</scope>
    <source>
        <strain>DSM 14371 / CIP 107618 / JCM 11309 / KCTC 3954 / HTE831</strain>
    </source>
</reference>
<evidence type="ECO:0000255" key="1">
    <source>
        <dbReference type="HAMAP-Rule" id="MF_01824"/>
    </source>
</evidence>
<protein>
    <recommendedName>
        <fullName evidence="1">Pyridoxal 5'-phosphate synthase subunit PdxS</fullName>
        <shortName evidence="1">PLP synthase subunit PdxS</shortName>
        <ecNumber evidence="1">4.3.3.6</ecNumber>
    </recommendedName>
    <alternativeName>
        <fullName evidence="1">Pdx1</fullName>
    </alternativeName>
</protein>
<proteinExistence type="inferred from homology"/>
<accession>Q8EN03</accession>